<accession>Q5R4D2</accession>
<name>OXND1_PONAB</name>
<gene>
    <name type="primary">OXNAD1</name>
</gene>
<sequence>MACAAVMIPGLLRCSVGAICTEAASLRLTLSTLRHLTLTSIMKSKRKTDHMERTASVLRREIVSAAKVCGAASESPSVKSLRLLVADQDFSFKAGQWVDFFIPGVSVVGGFSICSSPRLLEQERVIELAVKYTNHPPALWVHNTCTLDSEVAVRVGGEFFFDPQPADASRNLVLIAGGVGINPLLSILRHAADLLREQANKRNGYEIGTIKLFYSAKSTSELLFKKNILDLVNEFPEKIACSSHVTKQTTQINAELKPYITGRITEKEIRDHISKETLFYICGPPPMTDFFSKQLENNHVPKEHICFEKWW</sequence>
<evidence type="ECO:0000250" key="1"/>
<evidence type="ECO:0000255" key="2"/>
<evidence type="ECO:0000255" key="3">
    <source>
        <dbReference type="PROSITE-ProRule" id="PRU00716"/>
    </source>
</evidence>
<reference key="1">
    <citation type="submission" date="2004-11" db="EMBL/GenBank/DDBJ databases">
        <authorList>
            <consortium name="The German cDNA consortium"/>
        </authorList>
    </citation>
    <scope>NUCLEOTIDE SEQUENCE [LARGE SCALE MRNA]</scope>
    <source>
        <tissue>Brain cortex</tissue>
    </source>
</reference>
<keyword id="KW-0520">NAD</keyword>
<keyword id="KW-0560">Oxidoreductase</keyword>
<keyword id="KW-1185">Reference proteome</keyword>
<keyword id="KW-0732">Signal</keyword>
<organism>
    <name type="scientific">Pongo abelii</name>
    <name type="common">Sumatran orangutan</name>
    <name type="synonym">Pongo pygmaeus abelii</name>
    <dbReference type="NCBI Taxonomy" id="9601"/>
    <lineage>
        <taxon>Eukaryota</taxon>
        <taxon>Metazoa</taxon>
        <taxon>Chordata</taxon>
        <taxon>Craniata</taxon>
        <taxon>Vertebrata</taxon>
        <taxon>Euteleostomi</taxon>
        <taxon>Mammalia</taxon>
        <taxon>Eutheria</taxon>
        <taxon>Euarchontoglires</taxon>
        <taxon>Primates</taxon>
        <taxon>Haplorrhini</taxon>
        <taxon>Catarrhini</taxon>
        <taxon>Hominidae</taxon>
        <taxon>Pongo</taxon>
    </lineage>
</organism>
<proteinExistence type="evidence at transcript level"/>
<protein>
    <recommendedName>
        <fullName>Oxidoreductase NAD-binding domain-containing protein 1</fullName>
        <ecNumber>1.-.-.-</ecNumber>
    </recommendedName>
</protein>
<dbReference type="EC" id="1.-.-.-"/>
<dbReference type="EMBL" id="CR861319">
    <property type="protein sequence ID" value="CAH93384.1"/>
    <property type="molecule type" value="mRNA"/>
</dbReference>
<dbReference type="RefSeq" id="NP_001126987.1">
    <property type="nucleotide sequence ID" value="NM_001133515.1"/>
</dbReference>
<dbReference type="SMR" id="Q5R4D2"/>
<dbReference type="FunCoup" id="Q5R4D2">
    <property type="interactions" value="162"/>
</dbReference>
<dbReference type="STRING" id="9601.ENSPPYP00000015753"/>
<dbReference type="GeneID" id="100174010"/>
<dbReference type="KEGG" id="pon:100174010"/>
<dbReference type="CTD" id="92106"/>
<dbReference type="eggNOG" id="KOG0534">
    <property type="taxonomic scope" value="Eukaryota"/>
</dbReference>
<dbReference type="InParanoid" id="Q5R4D2"/>
<dbReference type="OrthoDB" id="436496at2759"/>
<dbReference type="Proteomes" id="UP000001595">
    <property type="component" value="Unplaced"/>
</dbReference>
<dbReference type="GO" id="GO:0005739">
    <property type="term" value="C:mitochondrion"/>
    <property type="evidence" value="ECO:0007669"/>
    <property type="project" value="TreeGrafter"/>
</dbReference>
<dbReference type="GO" id="GO:0016491">
    <property type="term" value="F:oxidoreductase activity"/>
    <property type="evidence" value="ECO:0007669"/>
    <property type="project" value="UniProtKB-KW"/>
</dbReference>
<dbReference type="CDD" id="cd00322">
    <property type="entry name" value="FNR_like"/>
    <property type="match status" value="1"/>
</dbReference>
<dbReference type="Gene3D" id="3.40.50.80">
    <property type="entry name" value="Nucleotide-binding domain of ferredoxin-NADP reductase (FNR) module"/>
    <property type="match status" value="1"/>
</dbReference>
<dbReference type="Gene3D" id="2.40.30.10">
    <property type="entry name" value="Translation factors"/>
    <property type="match status" value="1"/>
</dbReference>
<dbReference type="InterPro" id="IPR017927">
    <property type="entry name" value="FAD-bd_FR_type"/>
</dbReference>
<dbReference type="InterPro" id="IPR039261">
    <property type="entry name" value="FNR_nucleotide-bd"/>
</dbReference>
<dbReference type="InterPro" id="IPR052128">
    <property type="entry name" value="Oxidoreductase_NAD-binding"/>
</dbReference>
<dbReference type="InterPro" id="IPR001433">
    <property type="entry name" value="OxRdtase_FAD/NAD-bd"/>
</dbReference>
<dbReference type="InterPro" id="IPR017938">
    <property type="entry name" value="Riboflavin_synthase-like_b-brl"/>
</dbReference>
<dbReference type="PANTHER" id="PTHR46505">
    <property type="entry name" value="OXIDOREDUCTASE NAD-BINDING DOMAIN-CONTAINING PROTEIN 1"/>
    <property type="match status" value="1"/>
</dbReference>
<dbReference type="PANTHER" id="PTHR46505:SF1">
    <property type="entry name" value="OXIDOREDUCTASE NAD-BINDING DOMAIN-CONTAINING PROTEIN 1"/>
    <property type="match status" value="1"/>
</dbReference>
<dbReference type="Pfam" id="PF00175">
    <property type="entry name" value="NAD_binding_1"/>
    <property type="match status" value="1"/>
</dbReference>
<dbReference type="PRINTS" id="PR00410">
    <property type="entry name" value="PHEHYDRXLASE"/>
</dbReference>
<dbReference type="SUPFAM" id="SSF52343">
    <property type="entry name" value="Ferredoxin reductase-like, C-terminal NADP-linked domain"/>
    <property type="match status" value="1"/>
</dbReference>
<dbReference type="SUPFAM" id="SSF63380">
    <property type="entry name" value="Riboflavin synthase domain-like"/>
    <property type="match status" value="1"/>
</dbReference>
<dbReference type="PROSITE" id="PS51384">
    <property type="entry name" value="FAD_FR"/>
    <property type="match status" value="1"/>
</dbReference>
<feature type="signal peptide" evidence="2">
    <location>
        <begin position="1"/>
        <end position="17"/>
    </location>
</feature>
<feature type="chain" id="PRO_0000299573" description="Oxidoreductase NAD-binding domain-containing protein 1">
    <location>
        <begin position="18"/>
        <end position="311"/>
    </location>
</feature>
<feature type="domain" description="FAD-binding FR-type" evidence="3">
    <location>
        <begin position="50"/>
        <end position="186"/>
    </location>
</feature>
<feature type="binding site" evidence="1">
    <location>
        <begin position="178"/>
        <end position="183"/>
    </location>
    <ligand>
        <name>NAD(+)</name>
        <dbReference type="ChEBI" id="CHEBI:57540"/>
    </ligand>
</feature>